<name>DER_COREF</name>
<dbReference type="EMBL" id="BA000035">
    <property type="protein sequence ID" value="BAC18371.1"/>
    <property type="status" value="ALT_INIT"/>
    <property type="molecule type" value="Genomic_DNA"/>
</dbReference>
<dbReference type="RefSeq" id="WP_006767559.1">
    <property type="nucleotide sequence ID" value="NZ_GG700683.1"/>
</dbReference>
<dbReference type="SMR" id="Q8FTK5"/>
<dbReference type="STRING" id="196164.gene:10741979"/>
<dbReference type="KEGG" id="cef:CE1561"/>
<dbReference type="eggNOG" id="COG1160">
    <property type="taxonomic scope" value="Bacteria"/>
</dbReference>
<dbReference type="HOGENOM" id="CLU_016077_6_2_11"/>
<dbReference type="OrthoDB" id="9805918at2"/>
<dbReference type="Proteomes" id="UP000001409">
    <property type="component" value="Chromosome"/>
</dbReference>
<dbReference type="GO" id="GO:0005525">
    <property type="term" value="F:GTP binding"/>
    <property type="evidence" value="ECO:0007669"/>
    <property type="project" value="UniProtKB-UniRule"/>
</dbReference>
<dbReference type="GO" id="GO:0043022">
    <property type="term" value="F:ribosome binding"/>
    <property type="evidence" value="ECO:0007669"/>
    <property type="project" value="TreeGrafter"/>
</dbReference>
<dbReference type="GO" id="GO:0042254">
    <property type="term" value="P:ribosome biogenesis"/>
    <property type="evidence" value="ECO:0007669"/>
    <property type="project" value="UniProtKB-KW"/>
</dbReference>
<dbReference type="CDD" id="cd01894">
    <property type="entry name" value="EngA1"/>
    <property type="match status" value="1"/>
</dbReference>
<dbReference type="CDD" id="cd01895">
    <property type="entry name" value="EngA2"/>
    <property type="match status" value="1"/>
</dbReference>
<dbReference type="FunFam" id="3.30.300.20:FF:000004">
    <property type="entry name" value="GTPase Der"/>
    <property type="match status" value="1"/>
</dbReference>
<dbReference type="FunFam" id="3.40.50.300:FF:000040">
    <property type="entry name" value="GTPase Der"/>
    <property type="match status" value="1"/>
</dbReference>
<dbReference type="FunFam" id="3.40.50.300:FF:000057">
    <property type="entry name" value="GTPase Der"/>
    <property type="match status" value="1"/>
</dbReference>
<dbReference type="Gene3D" id="3.30.300.20">
    <property type="match status" value="1"/>
</dbReference>
<dbReference type="Gene3D" id="3.40.50.300">
    <property type="entry name" value="P-loop containing nucleotide triphosphate hydrolases"/>
    <property type="match status" value="2"/>
</dbReference>
<dbReference type="HAMAP" id="MF_00195">
    <property type="entry name" value="GTPase_Der"/>
    <property type="match status" value="1"/>
</dbReference>
<dbReference type="InterPro" id="IPR031166">
    <property type="entry name" value="G_ENGA"/>
</dbReference>
<dbReference type="InterPro" id="IPR006073">
    <property type="entry name" value="GTP-bd"/>
</dbReference>
<dbReference type="InterPro" id="IPR016484">
    <property type="entry name" value="GTPase_Der"/>
</dbReference>
<dbReference type="InterPro" id="IPR032859">
    <property type="entry name" value="KH_dom-like"/>
</dbReference>
<dbReference type="InterPro" id="IPR015946">
    <property type="entry name" value="KH_dom-like_a/b"/>
</dbReference>
<dbReference type="InterPro" id="IPR027417">
    <property type="entry name" value="P-loop_NTPase"/>
</dbReference>
<dbReference type="InterPro" id="IPR005225">
    <property type="entry name" value="Small_GTP-bd"/>
</dbReference>
<dbReference type="NCBIfam" id="TIGR03594">
    <property type="entry name" value="GTPase_EngA"/>
    <property type="match status" value="1"/>
</dbReference>
<dbReference type="NCBIfam" id="NF002828">
    <property type="entry name" value="PRK03003.1"/>
    <property type="match status" value="1"/>
</dbReference>
<dbReference type="NCBIfam" id="TIGR00231">
    <property type="entry name" value="small_GTP"/>
    <property type="match status" value="2"/>
</dbReference>
<dbReference type="PANTHER" id="PTHR43834">
    <property type="entry name" value="GTPASE DER"/>
    <property type="match status" value="1"/>
</dbReference>
<dbReference type="PANTHER" id="PTHR43834:SF6">
    <property type="entry name" value="GTPASE DER"/>
    <property type="match status" value="1"/>
</dbReference>
<dbReference type="Pfam" id="PF14714">
    <property type="entry name" value="KH_dom-like"/>
    <property type="match status" value="1"/>
</dbReference>
<dbReference type="Pfam" id="PF01926">
    <property type="entry name" value="MMR_HSR1"/>
    <property type="match status" value="2"/>
</dbReference>
<dbReference type="PIRSF" id="PIRSF006485">
    <property type="entry name" value="GTP-binding_EngA"/>
    <property type="match status" value="1"/>
</dbReference>
<dbReference type="PRINTS" id="PR00326">
    <property type="entry name" value="GTP1OBG"/>
</dbReference>
<dbReference type="SUPFAM" id="SSF52540">
    <property type="entry name" value="P-loop containing nucleoside triphosphate hydrolases"/>
    <property type="match status" value="2"/>
</dbReference>
<dbReference type="PROSITE" id="PS51712">
    <property type="entry name" value="G_ENGA"/>
    <property type="match status" value="2"/>
</dbReference>
<comment type="function">
    <text evidence="1">GTPase that plays an essential role in the late steps of ribosome biogenesis.</text>
</comment>
<comment type="subunit">
    <text evidence="1">Associates with the 50S ribosomal subunit.</text>
</comment>
<comment type="similarity">
    <text evidence="1">Belongs to the TRAFAC class TrmE-Era-EngA-EngB-Septin-like GTPase superfamily. EngA (Der) GTPase family.</text>
</comment>
<comment type="sequence caution" evidence="3">
    <conflict type="erroneous initiation">
        <sequence resource="EMBL-CDS" id="BAC18371"/>
    </conflict>
    <text>Extended N-terminus.</text>
</comment>
<organism>
    <name type="scientific">Corynebacterium efficiens (strain DSM 44549 / YS-314 / AJ 12310 / JCM 11189 / NBRC 100395)</name>
    <dbReference type="NCBI Taxonomy" id="196164"/>
    <lineage>
        <taxon>Bacteria</taxon>
        <taxon>Bacillati</taxon>
        <taxon>Actinomycetota</taxon>
        <taxon>Actinomycetes</taxon>
        <taxon>Mycobacteriales</taxon>
        <taxon>Corynebacteriaceae</taxon>
        <taxon>Corynebacterium</taxon>
    </lineage>
</organism>
<keyword id="KW-0342">GTP-binding</keyword>
<keyword id="KW-0547">Nucleotide-binding</keyword>
<keyword id="KW-1185">Reference proteome</keyword>
<keyword id="KW-0677">Repeat</keyword>
<keyword id="KW-0690">Ribosome biogenesis</keyword>
<sequence>MDVEGAFADEEELAPHGGWASKDFDPSEFGYDDDFAPDDSDEDEDDDDYEFDEDDFAAPDFGEDYTEEEWEELERSLGIERREHLEESLCTVAIVGRPNVGKSTLVNRFIGRREAVVEDFPGVTRDRISYLSDWGGQRFWVQDTGGWDPNVKGIHASIAHQAELAMASADVIVFVVDTKVGITETDAVMARKLKRADVPVILVANKFDSDSQWADMAEFYALGLGDPFPVSAQHGRGGADVLDKILESFPEEPRAKSIVEGPRRVALVGKPNVGKSSLLNKFAGEERSVVDNVAGTTVDPVDSIIQLDQKMWKFIDTAGLRKKVKTATGHEFYASLRTRSVIDSAEVCVLLIDSSEPITEQDQRVLAMITDAGKALVVAFNKWDLMDEDRRWELDRELDLQLAHIPWAKRINISAKTGRALQRLEPAMIEALENWDRRVSTGQLNNWLREAIAANPPPMRGGRLPRVLFATQASTRPPVIVLFTTGFLEAGYRRYLERKFRERFGFNGTPIRIAVRVRERRGKGGKKQ</sequence>
<protein>
    <recommendedName>
        <fullName evidence="1">GTPase Der</fullName>
    </recommendedName>
    <alternativeName>
        <fullName evidence="1">GTP-binding protein EngA</fullName>
    </alternativeName>
</protein>
<proteinExistence type="inferred from homology"/>
<gene>
    <name evidence="1" type="primary">der</name>
    <name type="synonym">engA</name>
    <name type="ordered locus">CE1561</name>
</gene>
<accession>Q8FTK5</accession>
<evidence type="ECO:0000255" key="1">
    <source>
        <dbReference type="HAMAP-Rule" id="MF_00195"/>
    </source>
</evidence>
<evidence type="ECO:0000256" key="2">
    <source>
        <dbReference type="SAM" id="MobiDB-lite"/>
    </source>
</evidence>
<evidence type="ECO:0000305" key="3"/>
<reference key="1">
    <citation type="journal article" date="2003" name="Genome Res.">
        <title>Comparative complete genome sequence analysis of the amino acid replacements responsible for the thermostability of Corynebacterium efficiens.</title>
        <authorList>
            <person name="Nishio Y."/>
            <person name="Nakamura Y."/>
            <person name="Kawarabayasi Y."/>
            <person name="Usuda Y."/>
            <person name="Kimura E."/>
            <person name="Sugimoto S."/>
            <person name="Matsui K."/>
            <person name="Yamagishi A."/>
            <person name="Kikuchi H."/>
            <person name="Ikeo K."/>
            <person name="Gojobori T."/>
        </authorList>
    </citation>
    <scope>NUCLEOTIDE SEQUENCE [LARGE SCALE GENOMIC DNA]</scope>
    <source>
        <strain>DSM 44549 / YS-314 / AJ 12310 / JCM 11189 / NBRC 100395</strain>
    </source>
</reference>
<feature type="chain" id="PRO_0000178987" description="GTPase Der">
    <location>
        <begin position="1"/>
        <end position="528"/>
    </location>
</feature>
<feature type="domain" description="EngA-type G 1">
    <location>
        <begin position="90"/>
        <end position="253"/>
    </location>
</feature>
<feature type="domain" description="EngA-type G 2">
    <location>
        <begin position="263"/>
        <end position="436"/>
    </location>
</feature>
<feature type="domain" description="KH-like" evidence="1">
    <location>
        <begin position="437"/>
        <end position="519"/>
    </location>
</feature>
<feature type="region of interest" description="Disordered" evidence="2">
    <location>
        <begin position="1"/>
        <end position="62"/>
    </location>
</feature>
<feature type="compositionally biased region" description="Acidic residues" evidence="2">
    <location>
        <begin position="1"/>
        <end position="12"/>
    </location>
</feature>
<feature type="compositionally biased region" description="Acidic residues" evidence="2">
    <location>
        <begin position="30"/>
        <end position="62"/>
    </location>
</feature>
<feature type="binding site" evidence="1">
    <location>
        <begin position="96"/>
        <end position="103"/>
    </location>
    <ligand>
        <name>GTP</name>
        <dbReference type="ChEBI" id="CHEBI:37565"/>
        <label>1</label>
    </ligand>
</feature>
<feature type="binding site" evidence="1">
    <location>
        <begin position="143"/>
        <end position="147"/>
    </location>
    <ligand>
        <name>GTP</name>
        <dbReference type="ChEBI" id="CHEBI:37565"/>
        <label>1</label>
    </ligand>
</feature>
<feature type="binding site" evidence="1">
    <location>
        <begin position="205"/>
        <end position="208"/>
    </location>
    <ligand>
        <name>GTP</name>
        <dbReference type="ChEBI" id="CHEBI:37565"/>
        <label>1</label>
    </ligand>
</feature>
<feature type="binding site" evidence="1">
    <location>
        <begin position="269"/>
        <end position="276"/>
    </location>
    <ligand>
        <name>GTP</name>
        <dbReference type="ChEBI" id="CHEBI:37565"/>
        <label>2</label>
    </ligand>
</feature>
<feature type="binding site" evidence="1">
    <location>
        <begin position="316"/>
        <end position="320"/>
    </location>
    <ligand>
        <name>GTP</name>
        <dbReference type="ChEBI" id="CHEBI:37565"/>
        <label>2</label>
    </ligand>
</feature>
<feature type="binding site" evidence="1">
    <location>
        <begin position="381"/>
        <end position="384"/>
    </location>
    <ligand>
        <name>GTP</name>
        <dbReference type="ChEBI" id="CHEBI:37565"/>
        <label>2</label>
    </ligand>
</feature>